<feature type="chain" id="PRO_0000113109" description="Aspartate carbamoyltransferase catalytic subunit">
    <location>
        <begin position="1"/>
        <end position="322"/>
    </location>
</feature>
<feature type="binding site" evidence="1">
    <location>
        <position position="65"/>
    </location>
    <ligand>
        <name>carbamoyl phosphate</name>
        <dbReference type="ChEBI" id="CHEBI:58228"/>
    </ligand>
</feature>
<feature type="binding site" evidence="1">
    <location>
        <position position="66"/>
    </location>
    <ligand>
        <name>carbamoyl phosphate</name>
        <dbReference type="ChEBI" id="CHEBI:58228"/>
    </ligand>
</feature>
<feature type="binding site" evidence="1">
    <location>
        <position position="93"/>
    </location>
    <ligand>
        <name>L-aspartate</name>
        <dbReference type="ChEBI" id="CHEBI:29991"/>
    </ligand>
</feature>
<feature type="binding site" evidence="1">
    <location>
        <position position="115"/>
    </location>
    <ligand>
        <name>carbamoyl phosphate</name>
        <dbReference type="ChEBI" id="CHEBI:58228"/>
    </ligand>
</feature>
<feature type="binding site" evidence="1">
    <location>
        <position position="143"/>
    </location>
    <ligand>
        <name>carbamoyl phosphate</name>
        <dbReference type="ChEBI" id="CHEBI:58228"/>
    </ligand>
</feature>
<feature type="binding site" evidence="1">
    <location>
        <position position="146"/>
    </location>
    <ligand>
        <name>carbamoyl phosphate</name>
        <dbReference type="ChEBI" id="CHEBI:58228"/>
    </ligand>
</feature>
<feature type="binding site" evidence="1">
    <location>
        <position position="176"/>
    </location>
    <ligand>
        <name>L-aspartate</name>
        <dbReference type="ChEBI" id="CHEBI:29991"/>
    </ligand>
</feature>
<feature type="binding site" evidence="1">
    <location>
        <position position="230"/>
    </location>
    <ligand>
        <name>L-aspartate</name>
        <dbReference type="ChEBI" id="CHEBI:29991"/>
    </ligand>
</feature>
<feature type="binding site" evidence="1">
    <location>
        <position position="271"/>
    </location>
    <ligand>
        <name>carbamoyl phosphate</name>
        <dbReference type="ChEBI" id="CHEBI:58228"/>
    </ligand>
</feature>
<feature type="binding site" evidence="1">
    <location>
        <position position="272"/>
    </location>
    <ligand>
        <name>carbamoyl phosphate</name>
        <dbReference type="ChEBI" id="CHEBI:58228"/>
    </ligand>
</feature>
<name>PYRB_BRUSU</name>
<dbReference type="EC" id="2.1.3.2" evidence="1"/>
<dbReference type="EMBL" id="AE014292">
    <property type="protein sequence ID" value="AAN33788.1"/>
    <property type="molecule type" value="Genomic_DNA"/>
</dbReference>
<dbReference type="EMBL" id="CP002998">
    <property type="protein sequence ID" value="AEM20065.1"/>
    <property type="molecule type" value="Genomic_DNA"/>
</dbReference>
<dbReference type="RefSeq" id="WP_002966034.1">
    <property type="nucleotide sequence ID" value="NZ_KN046805.1"/>
</dbReference>
<dbReference type="SMR" id="P65612"/>
<dbReference type="KEGG" id="bms:BRA0599"/>
<dbReference type="KEGG" id="bsi:BS1330_II0594"/>
<dbReference type="PATRIC" id="fig|204722.21.peg.540"/>
<dbReference type="HOGENOM" id="CLU_043846_2_0_5"/>
<dbReference type="PhylomeDB" id="P65612"/>
<dbReference type="UniPathway" id="UPA00070">
    <property type="reaction ID" value="UER00116"/>
</dbReference>
<dbReference type="PRO" id="PR:P65612"/>
<dbReference type="Proteomes" id="UP000007104">
    <property type="component" value="Chromosome II"/>
</dbReference>
<dbReference type="GO" id="GO:0005829">
    <property type="term" value="C:cytosol"/>
    <property type="evidence" value="ECO:0007669"/>
    <property type="project" value="TreeGrafter"/>
</dbReference>
<dbReference type="GO" id="GO:0016597">
    <property type="term" value="F:amino acid binding"/>
    <property type="evidence" value="ECO:0007669"/>
    <property type="project" value="InterPro"/>
</dbReference>
<dbReference type="GO" id="GO:0004070">
    <property type="term" value="F:aspartate carbamoyltransferase activity"/>
    <property type="evidence" value="ECO:0007669"/>
    <property type="project" value="UniProtKB-UniRule"/>
</dbReference>
<dbReference type="GO" id="GO:0006207">
    <property type="term" value="P:'de novo' pyrimidine nucleobase biosynthetic process"/>
    <property type="evidence" value="ECO:0007669"/>
    <property type="project" value="InterPro"/>
</dbReference>
<dbReference type="GO" id="GO:0044205">
    <property type="term" value="P:'de novo' UMP biosynthetic process"/>
    <property type="evidence" value="ECO:0007669"/>
    <property type="project" value="UniProtKB-UniRule"/>
</dbReference>
<dbReference type="GO" id="GO:0006520">
    <property type="term" value="P:amino acid metabolic process"/>
    <property type="evidence" value="ECO:0007669"/>
    <property type="project" value="InterPro"/>
</dbReference>
<dbReference type="FunFam" id="3.40.50.1370:FF:000007">
    <property type="entry name" value="Aspartate carbamoyltransferase"/>
    <property type="match status" value="1"/>
</dbReference>
<dbReference type="Gene3D" id="3.40.50.1370">
    <property type="entry name" value="Aspartate/ornithine carbamoyltransferase"/>
    <property type="match status" value="2"/>
</dbReference>
<dbReference type="HAMAP" id="MF_00001">
    <property type="entry name" value="Asp_carb_tr"/>
    <property type="match status" value="1"/>
</dbReference>
<dbReference type="InterPro" id="IPR006132">
    <property type="entry name" value="Asp/Orn_carbamoyltranf_P-bd"/>
</dbReference>
<dbReference type="InterPro" id="IPR006130">
    <property type="entry name" value="Asp/Orn_carbamoylTrfase"/>
</dbReference>
<dbReference type="InterPro" id="IPR036901">
    <property type="entry name" value="Asp/Orn_carbamoylTrfase_sf"/>
</dbReference>
<dbReference type="InterPro" id="IPR002082">
    <property type="entry name" value="Asp_carbamoyltransf"/>
</dbReference>
<dbReference type="InterPro" id="IPR006131">
    <property type="entry name" value="Asp_carbamoyltransf_Asp/Orn-bd"/>
</dbReference>
<dbReference type="NCBIfam" id="TIGR00670">
    <property type="entry name" value="asp_carb_tr"/>
    <property type="match status" value="1"/>
</dbReference>
<dbReference type="NCBIfam" id="NF002032">
    <property type="entry name" value="PRK00856.1"/>
    <property type="match status" value="1"/>
</dbReference>
<dbReference type="PANTHER" id="PTHR45753:SF6">
    <property type="entry name" value="ASPARTATE CARBAMOYLTRANSFERASE"/>
    <property type="match status" value="1"/>
</dbReference>
<dbReference type="PANTHER" id="PTHR45753">
    <property type="entry name" value="ORNITHINE CARBAMOYLTRANSFERASE, MITOCHONDRIAL"/>
    <property type="match status" value="1"/>
</dbReference>
<dbReference type="Pfam" id="PF00185">
    <property type="entry name" value="OTCace"/>
    <property type="match status" value="1"/>
</dbReference>
<dbReference type="Pfam" id="PF02729">
    <property type="entry name" value="OTCace_N"/>
    <property type="match status" value="1"/>
</dbReference>
<dbReference type="PRINTS" id="PR00100">
    <property type="entry name" value="AOTCASE"/>
</dbReference>
<dbReference type="PRINTS" id="PR00101">
    <property type="entry name" value="ATCASE"/>
</dbReference>
<dbReference type="SUPFAM" id="SSF53671">
    <property type="entry name" value="Aspartate/ornithine carbamoyltransferase"/>
    <property type="match status" value="1"/>
</dbReference>
<dbReference type="PROSITE" id="PS00097">
    <property type="entry name" value="CARBAMOYLTRANSFERASE"/>
    <property type="match status" value="1"/>
</dbReference>
<reference key="1">
    <citation type="journal article" date="2002" name="Proc. Natl. Acad. Sci. U.S.A.">
        <title>The Brucella suis genome reveals fundamental similarities between animal and plant pathogens and symbionts.</title>
        <authorList>
            <person name="Paulsen I.T."/>
            <person name="Seshadri R."/>
            <person name="Nelson K.E."/>
            <person name="Eisen J.A."/>
            <person name="Heidelberg J.F."/>
            <person name="Read T.D."/>
            <person name="Dodson R.J."/>
            <person name="Umayam L.A."/>
            <person name="Brinkac L.M."/>
            <person name="Beanan M.J."/>
            <person name="Daugherty S.C."/>
            <person name="DeBoy R.T."/>
            <person name="Durkin A.S."/>
            <person name="Kolonay J.F."/>
            <person name="Madupu R."/>
            <person name="Nelson W.C."/>
            <person name="Ayodeji B."/>
            <person name="Kraul M."/>
            <person name="Shetty J."/>
            <person name="Malek J.A."/>
            <person name="Van Aken S.E."/>
            <person name="Riedmuller S."/>
            <person name="Tettelin H."/>
            <person name="Gill S.R."/>
            <person name="White O."/>
            <person name="Salzberg S.L."/>
            <person name="Hoover D.L."/>
            <person name="Lindler L.E."/>
            <person name="Halling S.M."/>
            <person name="Boyle S.M."/>
            <person name="Fraser C.M."/>
        </authorList>
    </citation>
    <scope>NUCLEOTIDE SEQUENCE [LARGE SCALE GENOMIC DNA]</scope>
    <source>
        <strain>1330</strain>
    </source>
</reference>
<reference key="2">
    <citation type="journal article" date="2011" name="J. Bacteriol.">
        <title>Revised genome sequence of Brucella suis 1330.</title>
        <authorList>
            <person name="Tae H."/>
            <person name="Shallom S."/>
            <person name="Settlage R."/>
            <person name="Preston D."/>
            <person name="Adams L.G."/>
            <person name="Garner H.R."/>
        </authorList>
    </citation>
    <scope>NUCLEOTIDE SEQUENCE [LARGE SCALE GENOMIC DNA]</scope>
    <source>
        <strain>1330</strain>
    </source>
</reference>
<protein>
    <recommendedName>
        <fullName evidence="1">Aspartate carbamoyltransferase catalytic subunit</fullName>
        <ecNumber evidence="1">2.1.3.2</ecNumber>
    </recommendedName>
    <alternativeName>
        <fullName evidence="1">Aspartate transcarbamylase</fullName>
        <shortName evidence="1">ATCase</shortName>
    </alternativeName>
</protein>
<organism>
    <name type="scientific">Brucella suis biovar 1 (strain 1330)</name>
    <dbReference type="NCBI Taxonomy" id="204722"/>
    <lineage>
        <taxon>Bacteria</taxon>
        <taxon>Pseudomonadati</taxon>
        <taxon>Pseudomonadota</taxon>
        <taxon>Alphaproteobacteria</taxon>
        <taxon>Hyphomicrobiales</taxon>
        <taxon>Brucellaceae</taxon>
        <taxon>Brucella/Ochrobactrum group</taxon>
        <taxon>Brucella</taxon>
    </lineage>
</organism>
<comment type="function">
    <text evidence="1">Catalyzes the condensation of carbamoyl phosphate and aspartate to form carbamoyl aspartate and inorganic phosphate, the committed step in the de novo pyrimidine nucleotide biosynthesis pathway.</text>
</comment>
<comment type="catalytic activity">
    <reaction evidence="1">
        <text>carbamoyl phosphate + L-aspartate = N-carbamoyl-L-aspartate + phosphate + H(+)</text>
        <dbReference type="Rhea" id="RHEA:20013"/>
        <dbReference type="ChEBI" id="CHEBI:15378"/>
        <dbReference type="ChEBI" id="CHEBI:29991"/>
        <dbReference type="ChEBI" id="CHEBI:32814"/>
        <dbReference type="ChEBI" id="CHEBI:43474"/>
        <dbReference type="ChEBI" id="CHEBI:58228"/>
        <dbReference type="EC" id="2.1.3.2"/>
    </reaction>
</comment>
<comment type="pathway">
    <text evidence="1">Pyrimidine metabolism; UMP biosynthesis via de novo pathway; (S)-dihydroorotate from bicarbonate: step 2/3.</text>
</comment>
<comment type="subunit">
    <text evidence="1">Heterododecamer (2C3:3R2) of six catalytic PyrB chains organized as two trimers (C3), and six regulatory PyrI chains organized as three dimers (R2).</text>
</comment>
<comment type="similarity">
    <text evidence="1">Belongs to the aspartate/ornithine carbamoyltransferase superfamily. ATCase family.</text>
</comment>
<evidence type="ECO:0000255" key="1">
    <source>
        <dbReference type="HAMAP-Rule" id="MF_00001"/>
    </source>
</evidence>
<gene>
    <name evidence="1" type="primary">pyrB</name>
    <name type="ordered locus">BRA0599</name>
    <name type="ordered locus">BS1330_II0594</name>
</gene>
<keyword id="KW-0665">Pyrimidine biosynthesis</keyword>
<keyword id="KW-0808">Transferase</keyword>
<accession>P65612</accession>
<accession>G0KCX7</accession>
<accession>Q8YC62</accession>
<proteinExistence type="inferred from homology"/>
<sequence>MTNQTVSPLFPHRHLLGIKGLSPLDILCLLDLADQEIAVSRQPEKKKSVLRGRTQINLFFEASTRTQSSFELAGKRLGADVMNMSVGNSSVKKGETLIDTAMTLNAMQPDILVIRHASAGAAALLAQKVGCSVVNAGDGAHEHPTQALLDALTIRRAKGQIENLIVAICGDVLHSRVARSNILLLNALGARVRVVAPSTLLPAGMADMSVEVFNSMEEGLKDADVVMMLRLQRERMAGSFVPSVREYFHFYGLDREKLKFAKPDALVMHPGPMNRGVEIASDVADGPQSVIQQQVEMGVAVRMAVMEALLDPRRNPGNGEPA</sequence>